<name>HEM1_PARXL</name>
<accession>Q13TU3</accession>
<sequence length="428" mass="47044">MQLLTIGINHHTAPVALRERVAFPLEQIKPALDTFKSIWLGPSARTAPEAAILSTCNRTELYCATDDQAAREAAIQWLSRYHNLPIGELAPHVYALPQSEAVRHAFRVASGLDSMVLGETQIVGQMKDAVRTASEAGALGTYLNQLFQRTFAVAKEVRSTTEIGAQSVSMAAAAVRLAQRIFDKVANQRVLFIGAGEMIELCATHFAAQQPKELVVANRTAERGTRLAERFNGRAIPLSELPSRMHEFDIIVSCTASTLPIIGLGAVERAVKARRHRPIFMVDLAVPRDIEPEVGQLEDVFLYTVDDLGAIVREGNASRQAAVAQAEAIIETRVQNFMQWLDARSIVPVIRHMHTQADVLRRAEVERAQKMLARGDDPAAVLEALSQALTNKLIHGPTHALNRASSENRDTLIELMSGFYKHSGSTER</sequence>
<proteinExistence type="inferred from homology"/>
<reference key="1">
    <citation type="journal article" date="2006" name="Proc. Natl. Acad. Sci. U.S.A.">
        <title>Burkholderia xenovorans LB400 harbors a multi-replicon, 9.73-Mbp genome shaped for versatility.</title>
        <authorList>
            <person name="Chain P.S.G."/>
            <person name="Denef V.J."/>
            <person name="Konstantinidis K.T."/>
            <person name="Vergez L.M."/>
            <person name="Agullo L."/>
            <person name="Reyes V.L."/>
            <person name="Hauser L."/>
            <person name="Cordova M."/>
            <person name="Gomez L."/>
            <person name="Gonzalez M."/>
            <person name="Land M."/>
            <person name="Lao V."/>
            <person name="Larimer F."/>
            <person name="LiPuma J.J."/>
            <person name="Mahenthiralingam E."/>
            <person name="Malfatti S.A."/>
            <person name="Marx C.J."/>
            <person name="Parnell J.J."/>
            <person name="Ramette A."/>
            <person name="Richardson P."/>
            <person name="Seeger M."/>
            <person name="Smith D."/>
            <person name="Spilker T."/>
            <person name="Sul W.J."/>
            <person name="Tsoi T.V."/>
            <person name="Ulrich L.E."/>
            <person name="Zhulin I.B."/>
            <person name="Tiedje J.M."/>
        </authorList>
    </citation>
    <scope>NUCLEOTIDE SEQUENCE [LARGE SCALE GENOMIC DNA]</scope>
    <source>
        <strain>LB400</strain>
    </source>
</reference>
<evidence type="ECO:0000255" key="1">
    <source>
        <dbReference type="HAMAP-Rule" id="MF_00087"/>
    </source>
</evidence>
<gene>
    <name evidence="1" type="primary">hemA</name>
    <name type="ordered locus">Bxeno_A3958</name>
    <name type="ORF">Bxe_A0437</name>
</gene>
<keyword id="KW-0521">NADP</keyword>
<keyword id="KW-0560">Oxidoreductase</keyword>
<keyword id="KW-0627">Porphyrin biosynthesis</keyword>
<keyword id="KW-1185">Reference proteome</keyword>
<dbReference type="EC" id="1.2.1.70" evidence="1"/>
<dbReference type="EMBL" id="CP000270">
    <property type="protein sequence ID" value="ABE32496.1"/>
    <property type="molecule type" value="Genomic_DNA"/>
</dbReference>
<dbReference type="RefSeq" id="WP_011489963.1">
    <property type="nucleotide sequence ID" value="NC_007951.1"/>
</dbReference>
<dbReference type="SMR" id="Q13TU3"/>
<dbReference type="STRING" id="266265.Bxe_A0437"/>
<dbReference type="KEGG" id="bxb:DR64_2608"/>
<dbReference type="KEGG" id="bxe:Bxe_A0437"/>
<dbReference type="PATRIC" id="fig|266265.5.peg.4181"/>
<dbReference type="eggNOG" id="COG0373">
    <property type="taxonomic scope" value="Bacteria"/>
</dbReference>
<dbReference type="OrthoDB" id="110209at2"/>
<dbReference type="UniPathway" id="UPA00251">
    <property type="reaction ID" value="UER00316"/>
</dbReference>
<dbReference type="Proteomes" id="UP000001817">
    <property type="component" value="Chromosome 1"/>
</dbReference>
<dbReference type="GO" id="GO:0008883">
    <property type="term" value="F:glutamyl-tRNA reductase activity"/>
    <property type="evidence" value="ECO:0007669"/>
    <property type="project" value="UniProtKB-UniRule"/>
</dbReference>
<dbReference type="GO" id="GO:0050661">
    <property type="term" value="F:NADP binding"/>
    <property type="evidence" value="ECO:0007669"/>
    <property type="project" value="InterPro"/>
</dbReference>
<dbReference type="GO" id="GO:0019353">
    <property type="term" value="P:protoporphyrinogen IX biosynthetic process from glutamate"/>
    <property type="evidence" value="ECO:0007669"/>
    <property type="project" value="TreeGrafter"/>
</dbReference>
<dbReference type="CDD" id="cd05213">
    <property type="entry name" value="NAD_bind_Glutamyl_tRNA_reduct"/>
    <property type="match status" value="1"/>
</dbReference>
<dbReference type="FunFam" id="3.30.460.30:FF:000001">
    <property type="entry name" value="Glutamyl-tRNA reductase"/>
    <property type="match status" value="1"/>
</dbReference>
<dbReference type="FunFam" id="3.40.50.720:FF:000031">
    <property type="entry name" value="Glutamyl-tRNA reductase"/>
    <property type="match status" value="1"/>
</dbReference>
<dbReference type="Gene3D" id="3.30.460.30">
    <property type="entry name" value="Glutamyl-tRNA reductase, N-terminal domain"/>
    <property type="match status" value="1"/>
</dbReference>
<dbReference type="Gene3D" id="3.40.50.720">
    <property type="entry name" value="NAD(P)-binding Rossmann-like Domain"/>
    <property type="match status" value="1"/>
</dbReference>
<dbReference type="HAMAP" id="MF_00087">
    <property type="entry name" value="Glu_tRNA_reductase"/>
    <property type="match status" value="1"/>
</dbReference>
<dbReference type="InterPro" id="IPR000343">
    <property type="entry name" value="4pyrrol_synth_GluRdtase"/>
</dbReference>
<dbReference type="InterPro" id="IPR015896">
    <property type="entry name" value="4pyrrol_synth_GluRdtase_dimer"/>
</dbReference>
<dbReference type="InterPro" id="IPR015895">
    <property type="entry name" value="4pyrrol_synth_GluRdtase_N"/>
</dbReference>
<dbReference type="InterPro" id="IPR018214">
    <property type="entry name" value="GluRdtase_CS"/>
</dbReference>
<dbReference type="InterPro" id="IPR036453">
    <property type="entry name" value="GluRdtase_dimer_dom_sf"/>
</dbReference>
<dbReference type="InterPro" id="IPR036343">
    <property type="entry name" value="GluRdtase_N_sf"/>
</dbReference>
<dbReference type="InterPro" id="IPR036291">
    <property type="entry name" value="NAD(P)-bd_dom_sf"/>
</dbReference>
<dbReference type="InterPro" id="IPR006151">
    <property type="entry name" value="Shikm_DH/Glu-tRNA_Rdtase"/>
</dbReference>
<dbReference type="NCBIfam" id="TIGR01035">
    <property type="entry name" value="hemA"/>
    <property type="match status" value="1"/>
</dbReference>
<dbReference type="PANTHER" id="PTHR43013">
    <property type="entry name" value="GLUTAMYL-TRNA REDUCTASE"/>
    <property type="match status" value="1"/>
</dbReference>
<dbReference type="PANTHER" id="PTHR43013:SF1">
    <property type="entry name" value="GLUTAMYL-TRNA REDUCTASE"/>
    <property type="match status" value="1"/>
</dbReference>
<dbReference type="Pfam" id="PF00745">
    <property type="entry name" value="GlutR_dimer"/>
    <property type="match status" value="1"/>
</dbReference>
<dbReference type="Pfam" id="PF05201">
    <property type="entry name" value="GlutR_N"/>
    <property type="match status" value="1"/>
</dbReference>
<dbReference type="Pfam" id="PF01488">
    <property type="entry name" value="Shikimate_DH"/>
    <property type="match status" value="1"/>
</dbReference>
<dbReference type="PIRSF" id="PIRSF000445">
    <property type="entry name" value="4pyrrol_synth_GluRdtase"/>
    <property type="match status" value="1"/>
</dbReference>
<dbReference type="SUPFAM" id="SSF69742">
    <property type="entry name" value="Glutamyl tRNA-reductase catalytic, N-terminal domain"/>
    <property type="match status" value="1"/>
</dbReference>
<dbReference type="SUPFAM" id="SSF69075">
    <property type="entry name" value="Glutamyl tRNA-reductase dimerization domain"/>
    <property type="match status" value="1"/>
</dbReference>
<dbReference type="SUPFAM" id="SSF51735">
    <property type="entry name" value="NAD(P)-binding Rossmann-fold domains"/>
    <property type="match status" value="1"/>
</dbReference>
<dbReference type="PROSITE" id="PS00747">
    <property type="entry name" value="GLUTR"/>
    <property type="match status" value="1"/>
</dbReference>
<comment type="function">
    <text evidence="1">Catalyzes the NADPH-dependent reduction of glutamyl-tRNA(Glu) to glutamate 1-semialdehyde (GSA).</text>
</comment>
<comment type="catalytic activity">
    <reaction evidence="1">
        <text>(S)-4-amino-5-oxopentanoate + tRNA(Glu) + NADP(+) = L-glutamyl-tRNA(Glu) + NADPH + H(+)</text>
        <dbReference type="Rhea" id="RHEA:12344"/>
        <dbReference type="Rhea" id="RHEA-COMP:9663"/>
        <dbReference type="Rhea" id="RHEA-COMP:9680"/>
        <dbReference type="ChEBI" id="CHEBI:15378"/>
        <dbReference type="ChEBI" id="CHEBI:57501"/>
        <dbReference type="ChEBI" id="CHEBI:57783"/>
        <dbReference type="ChEBI" id="CHEBI:58349"/>
        <dbReference type="ChEBI" id="CHEBI:78442"/>
        <dbReference type="ChEBI" id="CHEBI:78520"/>
        <dbReference type="EC" id="1.2.1.70"/>
    </reaction>
</comment>
<comment type="pathway">
    <text evidence="1">Porphyrin-containing compound metabolism; protoporphyrin-IX biosynthesis; 5-aminolevulinate from L-glutamyl-tRNA(Glu): step 1/2.</text>
</comment>
<comment type="subunit">
    <text evidence="1">Homodimer.</text>
</comment>
<comment type="domain">
    <text evidence="1">Possesses an unusual extended V-shaped dimeric structure with each monomer consisting of three distinct domains arranged along a curved 'spinal' alpha-helix. The N-terminal catalytic domain specifically recognizes the glutamate moiety of the substrate. The second domain is the NADPH-binding domain, and the third C-terminal domain is responsible for dimerization.</text>
</comment>
<comment type="miscellaneous">
    <text evidence="1">During catalysis, the active site Cys acts as a nucleophile attacking the alpha-carbonyl group of tRNA-bound glutamate with the formation of a thioester intermediate between enzyme and glutamate, and the concomitant release of tRNA(Glu). The thioester intermediate is finally reduced by direct hydride transfer from NADPH, to form the product GSA.</text>
</comment>
<comment type="similarity">
    <text evidence="1">Belongs to the glutamyl-tRNA reductase family.</text>
</comment>
<feature type="chain" id="PRO_1000004602" description="Glutamyl-tRNA reductase">
    <location>
        <begin position="1"/>
        <end position="428"/>
    </location>
</feature>
<feature type="active site" description="Nucleophile" evidence="1">
    <location>
        <position position="56"/>
    </location>
</feature>
<feature type="binding site" evidence="1">
    <location>
        <begin position="55"/>
        <end position="58"/>
    </location>
    <ligand>
        <name>substrate</name>
    </ligand>
</feature>
<feature type="binding site" evidence="1">
    <location>
        <position position="114"/>
    </location>
    <ligand>
        <name>substrate</name>
    </ligand>
</feature>
<feature type="binding site" evidence="1">
    <location>
        <begin position="119"/>
        <end position="121"/>
    </location>
    <ligand>
        <name>substrate</name>
    </ligand>
</feature>
<feature type="binding site" evidence="1">
    <location>
        <position position="125"/>
    </location>
    <ligand>
        <name>substrate</name>
    </ligand>
</feature>
<feature type="binding site" evidence="1">
    <location>
        <begin position="194"/>
        <end position="199"/>
    </location>
    <ligand>
        <name>NADP(+)</name>
        <dbReference type="ChEBI" id="CHEBI:58349"/>
    </ligand>
</feature>
<feature type="site" description="Important for activity" evidence="1">
    <location>
        <position position="104"/>
    </location>
</feature>
<protein>
    <recommendedName>
        <fullName evidence="1">Glutamyl-tRNA reductase</fullName>
        <shortName evidence="1">GluTR</shortName>
        <ecNumber evidence="1">1.2.1.70</ecNumber>
    </recommendedName>
</protein>
<organism>
    <name type="scientific">Paraburkholderia xenovorans (strain LB400)</name>
    <dbReference type="NCBI Taxonomy" id="266265"/>
    <lineage>
        <taxon>Bacteria</taxon>
        <taxon>Pseudomonadati</taxon>
        <taxon>Pseudomonadota</taxon>
        <taxon>Betaproteobacteria</taxon>
        <taxon>Burkholderiales</taxon>
        <taxon>Burkholderiaceae</taxon>
        <taxon>Paraburkholderia</taxon>
    </lineage>
</organism>